<accession>Q03FT5</accession>
<name>EFTS_PEDPA</name>
<protein>
    <recommendedName>
        <fullName evidence="1">Elongation factor Ts</fullName>
        <shortName evidence="1">EF-Ts</shortName>
    </recommendedName>
</protein>
<feature type="chain" id="PRO_1000006143" description="Elongation factor Ts">
    <location>
        <begin position="1"/>
        <end position="292"/>
    </location>
</feature>
<feature type="region of interest" description="Involved in Mg(2+) ion dislocation from EF-Tu" evidence="1">
    <location>
        <begin position="80"/>
        <end position="83"/>
    </location>
</feature>
<dbReference type="EMBL" id="CP000422">
    <property type="protein sequence ID" value="ABJ67937.1"/>
    <property type="molecule type" value="Genomic_DNA"/>
</dbReference>
<dbReference type="RefSeq" id="WP_002833606.1">
    <property type="nucleotide sequence ID" value="NC_008525.1"/>
</dbReference>
<dbReference type="SMR" id="Q03FT5"/>
<dbReference type="STRING" id="278197.PEPE_0878"/>
<dbReference type="GeneID" id="33061410"/>
<dbReference type="KEGG" id="ppe:PEPE_0878"/>
<dbReference type="eggNOG" id="COG0264">
    <property type="taxonomic scope" value="Bacteria"/>
</dbReference>
<dbReference type="HOGENOM" id="CLU_047155_0_2_9"/>
<dbReference type="OrthoDB" id="9808348at2"/>
<dbReference type="Proteomes" id="UP000000773">
    <property type="component" value="Chromosome"/>
</dbReference>
<dbReference type="GO" id="GO:0005737">
    <property type="term" value="C:cytoplasm"/>
    <property type="evidence" value="ECO:0007669"/>
    <property type="project" value="UniProtKB-SubCell"/>
</dbReference>
<dbReference type="GO" id="GO:0003746">
    <property type="term" value="F:translation elongation factor activity"/>
    <property type="evidence" value="ECO:0007669"/>
    <property type="project" value="UniProtKB-UniRule"/>
</dbReference>
<dbReference type="CDD" id="cd14275">
    <property type="entry name" value="UBA_EF-Ts"/>
    <property type="match status" value="1"/>
</dbReference>
<dbReference type="FunFam" id="1.10.286.20:FF:000001">
    <property type="entry name" value="Elongation factor Ts"/>
    <property type="match status" value="1"/>
</dbReference>
<dbReference type="FunFam" id="1.10.8.10:FF:000001">
    <property type="entry name" value="Elongation factor Ts"/>
    <property type="match status" value="1"/>
</dbReference>
<dbReference type="Gene3D" id="1.10.286.20">
    <property type="match status" value="1"/>
</dbReference>
<dbReference type="Gene3D" id="1.10.8.10">
    <property type="entry name" value="DNA helicase RuvA subunit, C-terminal domain"/>
    <property type="match status" value="1"/>
</dbReference>
<dbReference type="Gene3D" id="3.30.479.20">
    <property type="entry name" value="Elongation factor Ts, dimerisation domain"/>
    <property type="match status" value="2"/>
</dbReference>
<dbReference type="HAMAP" id="MF_00050">
    <property type="entry name" value="EF_Ts"/>
    <property type="match status" value="1"/>
</dbReference>
<dbReference type="InterPro" id="IPR036402">
    <property type="entry name" value="EF-Ts_dimer_sf"/>
</dbReference>
<dbReference type="InterPro" id="IPR001816">
    <property type="entry name" value="Transl_elong_EFTs/EF1B"/>
</dbReference>
<dbReference type="InterPro" id="IPR014039">
    <property type="entry name" value="Transl_elong_EFTs/EF1B_dimer"/>
</dbReference>
<dbReference type="InterPro" id="IPR018101">
    <property type="entry name" value="Transl_elong_Ts_CS"/>
</dbReference>
<dbReference type="InterPro" id="IPR009060">
    <property type="entry name" value="UBA-like_sf"/>
</dbReference>
<dbReference type="NCBIfam" id="TIGR00116">
    <property type="entry name" value="tsf"/>
    <property type="match status" value="1"/>
</dbReference>
<dbReference type="PANTHER" id="PTHR11741">
    <property type="entry name" value="ELONGATION FACTOR TS"/>
    <property type="match status" value="1"/>
</dbReference>
<dbReference type="PANTHER" id="PTHR11741:SF0">
    <property type="entry name" value="ELONGATION FACTOR TS, MITOCHONDRIAL"/>
    <property type="match status" value="1"/>
</dbReference>
<dbReference type="Pfam" id="PF00889">
    <property type="entry name" value="EF_TS"/>
    <property type="match status" value="1"/>
</dbReference>
<dbReference type="SUPFAM" id="SSF54713">
    <property type="entry name" value="Elongation factor Ts (EF-Ts), dimerisation domain"/>
    <property type="match status" value="2"/>
</dbReference>
<dbReference type="SUPFAM" id="SSF46934">
    <property type="entry name" value="UBA-like"/>
    <property type="match status" value="1"/>
</dbReference>
<dbReference type="PROSITE" id="PS01127">
    <property type="entry name" value="EF_TS_2"/>
    <property type="match status" value="1"/>
</dbReference>
<evidence type="ECO:0000255" key="1">
    <source>
        <dbReference type="HAMAP-Rule" id="MF_00050"/>
    </source>
</evidence>
<organism>
    <name type="scientific">Pediococcus pentosaceus (strain ATCC 25745 / CCUG 21536 / LMG 10740 / 183-1w)</name>
    <dbReference type="NCBI Taxonomy" id="278197"/>
    <lineage>
        <taxon>Bacteria</taxon>
        <taxon>Bacillati</taxon>
        <taxon>Bacillota</taxon>
        <taxon>Bacilli</taxon>
        <taxon>Lactobacillales</taxon>
        <taxon>Lactobacillaceae</taxon>
        <taxon>Pediococcus</taxon>
    </lineage>
</organism>
<reference key="1">
    <citation type="journal article" date="2006" name="Proc. Natl. Acad. Sci. U.S.A.">
        <title>Comparative genomics of the lactic acid bacteria.</title>
        <authorList>
            <person name="Makarova K.S."/>
            <person name="Slesarev A."/>
            <person name="Wolf Y.I."/>
            <person name="Sorokin A."/>
            <person name="Mirkin B."/>
            <person name="Koonin E.V."/>
            <person name="Pavlov A."/>
            <person name="Pavlova N."/>
            <person name="Karamychev V."/>
            <person name="Polouchine N."/>
            <person name="Shakhova V."/>
            <person name="Grigoriev I."/>
            <person name="Lou Y."/>
            <person name="Rohksar D."/>
            <person name="Lucas S."/>
            <person name="Huang K."/>
            <person name="Goodstein D.M."/>
            <person name="Hawkins T."/>
            <person name="Plengvidhya V."/>
            <person name="Welker D."/>
            <person name="Hughes J."/>
            <person name="Goh Y."/>
            <person name="Benson A."/>
            <person name="Baldwin K."/>
            <person name="Lee J.-H."/>
            <person name="Diaz-Muniz I."/>
            <person name="Dosti B."/>
            <person name="Smeianov V."/>
            <person name="Wechter W."/>
            <person name="Barabote R."/>
            <person name="Lorca G."/>
            <person name="Altermann E."/>
            <person name="Barrangou R."/>
            <person name="Ganesan B."/>
            <person name="Xie Y."/>
            <person name="Rawsthorne H."/>
            <person name="Tamir D."/>
            <person name="Parker C."/>
            <person name="Breidt F."/>
            <person name="Broadbent J.R."/>
            <person name="Hutkins R."/>
            <person name="O'Sullivan D."/>
            <person name="Steele J."/>
            <person name="Unlu G."/>
            <person name="Saier M.H. Jr."/>
            <person name="Klaenhammer T."/>
            <person name="Richardson P."/>
            <person name="Kozyavkin S."/>
            <person name="Weimer B.C."/>
            <person name="Mills D.A."/>
        </authorList>
    </citation>
    <scope>NUCLEOTIDE SEQUENCE [LARGE SCALE GENOMIC DNA]</scope>
    <source>
        <strain>ATCC 25745 / CCUG 21536 / LMG 10740 / 183-1w</strain>
    </source>
</reference>
<proteinExistence type="inferred from homology"/>
<keyword id="KW-0963">Cytoplasm</keyword>
<keyword id="KW-0251">Elongation factor</keyword>
<keyword id="KW-0648">Protein biosynthesis</keyword>
<sequence>MASISAKLVKELRDKIGVGMMDAKKALVATEGDMDKAVDFLREKGIAKAAKKSDRVAAEGLADVEMHDNTAAIVEVNSETDFVASNDRFIDLVKEIASQVALEKPADVDAALKLKSPKGTLNDDIIEATQVIGEKISLRRFATLEKGENEHFGSYLHMGGKIAALVLLEGADEETAKDVAMHVAAINPKYVNRDQVPAEVLDHEREVLSKEAEGEGKPANIIEKMVTGRLNKFLAEISLDDQEYVKDPDQTVAKYVASKGGKVKSFIRFEVGEGIEKQTVDFAEEVRKEMGQ</sequence>
<gene>
    <name evidence="1" type="primary">tsf</name>
    <name type="ordered locus">PEPE_0878</name>
</gene>
<comment type="function">
    <text evidence="1">Associates with the EF-Tu.GDP complex and induces the exchange of GDP to GTP. It remains bound to the aminoacyl-tRNA.EF-Tu.GTP complex up to the GTP hydrolysis stage on the ribosome.</text>
</comment>
<comment type="subcellular location">
    <subcellularLocation>
        <location evidence="1">Cytoplasm</location>
    </subcellularLocation>
</comment>
<comment type="similarity">
    <text evidence="1">Belongs to the EF-Ts family.</text>
</comment>